<organism>
    <name type="scientific">Halobacterium salinarum (strain ATCC 700922 / JCM 11081 / NRC-1)</name>
    <name type="common">Halobacterium halobium</name>
    <dbReference type="NCBI Taxonomy" id="64091"/>
    <lineage>
        <taxon>Archaea</taxon>
        <taxon>Methanobacteriati</taxon>
        <taxon>Methanobacteriota</taxon>
        <taxon>Stenosarchaea group</taxon>
        <taxon>Halobacteria</taxon>
        <taxon>Halobacteriales</taxon>
        <taxon>Halobacteriaceae</taxon>
        <taxon>Halobacterium</taxon>
        <taxon>Halobacterium salinarum NRC-34001</taxon>
    </lineage>
</organism>
<keyword id="KW-0066">ATP synthesis</keyword>
<keyword id="KW-1003">Cell membrane</keyword>
<keyword id="KW-0375">Hydrogen ion transport</keyword>
<keyword id="KW-0406">Ion transport</keyword>
<keyword id="KW-0472">Membrane</keyword>
<keyword id="KW-1185">Reference proteome</keyword>
<keyword id="KW-0813">Transport</keyword>
<sequence length="195" mass="21782">MSLETVVEDIRDEARERAKEIRADADERADEIVAEAEADADDIIADAEAEVTAEIDQEREQQLSSAELEAKQMRLEARRDALQSVRSAVEDRIVALDGDEREELTRELLDAASTEFDGADTVRVFGRADDEALISEILDDYDGYEYAGEYDCLGGVVVESDASRIRVNNTFDSILADAWENNLKAISARLFDEEQ</sequence>
<evidence type="ECO:0000255" key="1">
    <source>
        <dbReference type="HAMAP-Rule" id="MF_00311"/>
    </source>
</evidence>
<comment type="function">
    <text evidence="1">Component of the A-type ATP synthase that produces ATP from ADP in the presence of a proton gradient across the membrane.</text>
</comment>
<comment type="subunit">
    <text evidence="1">Has multiple subunits with at least A(3), B(3), C, D, E, F, H, I and proteolipid K(x).</text>
</comment>
<comment type="subcellular location">
    <subcellularLocation>
        <location evidence="1">Cell membrane</location>
        <topology evidence="1">Peripheral membrane protein</topology>
    </subcellularLocation>
</comment>
<comment type="similarity">
    <text evidence="1">Belongs to the V-ATPase E subunit family.</text>
</comment>
<accession>Q9HNE0</accession>
<protein>
    <recommendedName>
        <fullName evidence="1">A-type ATP synthase subunit E</fullName>
    </recommendedName>
</protein>
<reference key="1">
    <citation type="journal article" date="2000" name="Proc. Natl. Acad. Sci. U.S.A.">
        <title>Genome sequence of Halobacterium species NRC-1.</title>
        <authorList>
            <person name="Ng W.V."/>
            <person name="Kennedy S.P."/>
            <person name="Mahairas G.G."/>
            <person name="Berquist B."/>
            <person name="Pan M."/>
            <person name="Shukla H.D."/>
            <person name="Lasky S.R."/>
            <person name="Baliga N.S."/>
            <person name="Thorsson V."/>
            <person name="Sbrogna J."/>
            <person name="Swartzell S."/>
            <person name="Weir D."/>
            <person name="Hall J."/>
            <person name="Dahl T.A."/>
            <person name="Welti R."/>
            <person name="Goo Y.A."/>
            <person name="Leithauser B."/>
            <person name="Keller K."/>
            <person name="Cruz R."/>
            <person name="Danson M.J."/>
            <person name="Hough D.W."/>
            <person name="Maddocks D.G."/>
            <person name="Jablonski P.E."/>
            <person name="Krebs M.P."/>
            <person name="Angevine C.M."/>
            <person name="Dale H."/>
            <person name="Isenbarger T.A."/>
            <person name="Peck R.F."/>
            <person name="Pohlschroder M."/>
            <person name="Spudich J.L."/>
            <person name="Jung K.-H."/>
            <person name="Alam M."/>
            <person name="Freitas T."/>
            <person name="Hou S."/>
            <person name="Daniels C.J."/>
            <person name="Dennis P.P."/>
            <person name="Omer A.D."/>
            <person name="Ebhardt H."/>
            <person name="Lowe T.M."/>
            <person name="Liang P."/>
            <person name="Riley M."/>
            <person name="Hood L."/>
            <person name="DasSarma S."/>
        </authorList>
    </citation>
    <scope>NUCLEOTIDE SEQUENCE [LARGE SCALE GENOMIC DNA]</scope>
    <source>
        <strain>ATCC 700922 / JCM 11081 / NRC-1</strain>
    </source>
</reference>
<name>AATE_HALSA</name>
<feature type="chain" id="PRO_0000117313" description="A-type ATP synthase subunit E">
    <location>
        <begin position="1"/>
        <end position="195"/>
    </location>
</feature>
<gene>
    <name evidence="1" type="primary">atpE</name>
    <name type="ordered locus">VNG_2142G</name>
</gene>
<proteinExistence type="inferred from homology"/>
<dbReference type="EMBL" id="AE004437">
    <property type="protein sequence ID" value="AAG20280.1"/>
    <property type="molecule type" value="Genomic_DNA"/>
</dbReference>
<dbReference type="PIR" id="D84364">
    <property type="entry name" value="D84364"/>
</dbReference>
<dbReference type="RefSeq" id="WP_010903582.1">
    <property type="nucleotide sequence ID" value="NC_002607.1"/>
</dbReference>
<dbReference type="SMR" id="Q9HNE0"/>
<dbReference type="STRING" id="64091.VNG_2142G"/>
<dbReference type="PaxDb" id="64091-VNG_2142G"/>
<dbReference type="KEGG" id="hal:VNG_2142G"/>
<dbReference type="PATRIC" id="fig|64091.14.peg.1640"/>
<dbReference type="HOGENOM" id="CLU_120786_0_0_2"/>
<dbReference type="InParanoid" id="Q9HNE0"/>
<dbReference type="OrthoDB" id="4691at2157"/>
<dbReference type="Proteomes" id="UP000000554">
    <property type="component" value="Chromosome"/>
</dbReference>
<dbReference type="GO" id="GO:0005886">
    <property type="term" value="C:plasma membrane"/>
    <property type="evidence" value="ECO:0007669"/>
    <property type="project" value="UniProtKB-SubCell"/>
</dbReference>
<dbReference type="GO" id="GO:0033178">
    <property type="term" value="C:proton-transporting two-sector ATPase complex, catalytic domain"/>
    <property type="evidence" value="ECO:0007669"/>
    <property type="project" value="InterPro"/>
</dbReference>
<dbReference type="GO" id="GO:0005524">
    <property type="term" value="F:ATP binding"/>
    <property type="evidence" value="ECO:0007669"/>
    <property type="project" value="UniProtKB-UniRule"/>
</dbReference>
<dbReference type="GO" id="GO:0046933">
    <property type="term" value="F:proton-transporting ATP synthase activity, rotational mechanism"/>
    <property type="evidence" value="ECO:0007669"/>
    <property type="project" value="UniProtKB-UniRule"/>
</dbReference>
<dbReference type="GO" id="GO:0046961">
    <property type="term" value="F:proton-transporting ATPase activity, rotational mechanism"/>
    <property type="evidence" value="ECO:0007669"/>
    <property type="project" value="InterPro"/>
</dbReference>
<dbReference type="GO" id="GO:0042777">
    <property type="term" value="P:proton motive force-driven plasma membrane ATP synthesis"/>
    <property type="evidence" value="ECO:0007669"/>
    <property type="project" value="UniProtKB-UniRule"/>
</dbReference>
<dbReference type="Gene3D" id="3.30.2320.30">
    <property type="entry name" value="ATP synthase, E subunit, C-terminal"/>
    <property type="match status" value="1"/>
</dbReference>
<dbReference type="Gene3D" id="1.20.5.620">
    <property type="entry name" value="F1F0 ATP synthase subunit B, membrane domain"/>
    <property type="match status" value="1"/>
</dbReference>
<dbReference type="HAMAP" id="MF_00311">
    <property type="entry name" value="ATP_synth_E_arch"/>
    <property type="match status" value="1"/>
</dbReference>
<dbReference type="InterPro" id="IPR038495">
    <property type="entry name" value="ATPase_E_C"/>
</dbReference>
<dbReference type="InterPro" id="IPR002842">
    <property type="entry name" value="ATPase_V1_Esu"/>
</dbReference>
<dbReference type="NCBIfam" id="NF002629">
    <property type="entry name" value="PRK02292.1"/>
    <property type="match status" value="1"/>
</dbReference>
<dbReference type="PANTHER" id="PTHR45715">
    <property type="entry name" value="ATPASE H+-TRANSPORTING V1 SUBUNIT E1A-RELATED"/>
    <property type="match status" value="1"/>
</dbReference>
<dbReference type="Pfam" id="PF01991">
    <property type="entry name" value="vATP-synt_E"/>
    <property type="match status" value="1"/>
</dbReference>
<dbReference type="SUPFAM" id="SSF160527">
    <property type="entry name" value="V-type ATPase subunit E-like"/>
    <property type="match status" value="1"/>
</dbReference>